<accession>B5XWQ7</accession>
<gene>
    <name evidence="1" type="primary">add</name>
    <name type="ordered locus">KPK_2390</name>
</gene>
<organism>
    <name type="scientific">Klebsiella pneumoniae (strain 342)</name>
    <dbReference type="NCBI Taxonomy" id="507522"/>
    <lineage>
        <taxon>Bacteria</taxon>
        <taxon>Pseudomonadati</taxon>
        <taxon>Pseudomonadota</taxon>
        <taxon>Gammaproteobacteria</taxon>
        <taxon>Enterobacterales</taxon>
        <taxon>Enterobacteriaceae</taxon>
        <taxon>Klebsiella/Raoultella group</taxon>
        <taxon>Klebsiella</taxon>
        <taxon>Klebsiella pneumoniae complex</taxon>
    </lineage>
</organism>
<evidence type="ECO:0000255" key="1">
    <source>
        <dbReference type="HAMAP-Rule" id="MF_00540"/>
    </source>
</evidence>
<keyword id="KW-0378">Hydrolase</keyword>
<keyword id="KW-0479">Metal-binding</keyword>
<keyword id="KW-0546">Nucleotide metabolism</keyword>
<keyword id="KW-0862">Zinc</keyword>
<feature type="chain" id="PRO_1000128849" description="Adenosine deaminase">
    <location>
        <begin position="1"/>
        <end position="333"/>
    </location>
</feature>
<feature type="active site" description="Proton donor" evidence="1">
    <location>
        <position position="200"/>
    </location>
</feature>
<feature type="binding site" evidence="1">
    <location>
        <position position="12"/>
    </location>
    <ligand>
        <name>Zn(2+)</name>
        <dbReference type="ChEBI" id="CHEBI:29105"/>
        <note>catalytic</note>
    </ligand>
</feature>
<feature type="binding site" evidence="1">
    <location>
        <position position="14"/>
    </location>
    <ligand>
        <name>substrate</name>
    </ligand>
</feature>
<feature type="binding site" evidence="1">
    <location>
        <position position="14"/>
    </location>
    <ligand>
        <name>Zn(2+)</name>
        <dbReference type="ChEBI" id="CHEBI:29105"/>
        <note>catalytic</note>
    </ligand>
</feature>
<feature type="binding site" evidence="1">
    <location>
        <position position="16"/>
    </location>
    <ligand>
        <name>substrate</name>
    </ligand>
</feature>
<feature type="binding site" evidence="1">
    <location>
        <position position="170"/>
    </location>
    <ligand>
        <name>substrate</name>
    </ligand>
</feature>
<feature type="binding site" evidence="1">
    <location>
        <position position="197"/>
    </location>
    <ligand>
        <name>Zn(2+)</name>
        <dbReference type="ChEBI" id="CHEBI:29105"/>
        <note>catalytic</note>
    </ligand>
</feature>
<feature type="binding site" evidence="1">
    <location>
        <position position="278"/>
    </location>
    <ligand>
        <name>Zn(2+)</name>
        <dbReference type="ChEBI" id="CHEBI:29105"/>
        <note>catalytic</note>
    </ligand>
</feature>
<feature type="binding site" evidence="1">
    <location>
        <position position="279"/>
    </location>
    <ligand>
        <name>substrate</name>
    </ligand>
</feature>
<feature type="site" description="Important for catalytic activity" evidence="1">
    <location>
        <position position="221"/>
    </location>
</feature>
<reference key="1">
    <citation type="journal article" date="2008" name="PLoS Genet.">
        <title>Complete genome sequence of the N2-fixing broad host range endophyte Klebsiella pneumoniae 342 and virulence predictions verified in mice.</title>
        <authorList>
            <person name="Fouts D.E."/>
            <person name="Tyler H.L."/>
            <person name="DeBoy R.T."/>
            <person name="Daugherty S."/>
            <person name="Ren Q."/>
            <person name="Badger J.H."/>
            <person name="Durkin A.S."/>
            <person name="Huot H."/>
            <person name="Shrivastava S."/>
            <person name="Kothari S."/>
            <person name="Dodson R.J."/>
            <person name="Mohamoud Y."/>
            <person name="Khouri H."/>
            <person name="Roesch L.F.W."/>
            <person name="Krogfelt K.A."/>
            <person name="Struve C."/>
            <person name="Triplett E.W."/>
            <person name="Methe B.A."/>
        </authorList>
    </citation>
    <scope>NUCLEOTIDE SEQUENCE [LARGE SCALE GENOMIC DNA]</scope>
    <source>
        <strain>342</strain>
    </source>
</reference>
<comment type="function">
    <text evidence="1">Catalyzes the hydrolytic deamination of adenosine and 2-deoxyadenosine.</text>
</comment>
<comment type="catalytic activity">
    <reaction evidence="1">
        <text>adenosine + H2O + H(+) = inosine + NH4(+)</text>
        <dbReference type="Rhea" id="RHEA:24408"/>
        <dbReference type="ChEBI" id="CHEBI:15377"/>
        <dbReference type="ChEBI" id="CHEBI:15378"/>
        <dbReference type="ChEBI" id="CHEBI:16335"/>
        <dbReference type="ChEBI" id="CHEBI:17596"/>
        <dbReference type="ChEBI" id="CHEBI:28938"/>
        <dbReference type="EC" id="3.5.4.4"/>
    </reaction>
    <physiologicalReaction direction="left-to-right" evidence="1">
        <dbReference type="Rhea" id="RHEA:24409"/>
    </physiologicalReaction>
</comment>
<comment type="catalytic activity">
    <reaction evidence="1">
        <text>2'-deoxyadenosine + H2O + H(+) = 2'-deoxyinosine + NH4(+)</text>
        <dbReference type="Rhea" id="RHEA:28190"/>
        <dbReference type="ChEBI" id="CHEBI:15377"/>
        <dbReference type="ChEBI" id="CHEBI:15378"/>
        <dbReference type="ChEBI" id="CHEBI:17256"/>
        <dbReference type="ChEBI" id="CHEBI:28938"/>
        <dbReference type="ChEBI" id="CHEBI:28997"/>
        <dbReference type="EC" id="3.5.4.4"/>
    </reaction>
    <physiologicalReaction direction="left-to-right" evidence="1">
        <dbReference type="Rhea" id="RHEA:28191"/>
    </physiologicalReaction>
</comment>
<comment type="cofactor">
    <cofactor evidence="1">
        <name>Zn(2+)</name>
        <dbReference type="ChEBI" id="CHEBI:29105"/>
    </cofactor>
    <text evidence="1">Binds 1 zinc ion per subunit.</text>
</comment>
<comment type="similarity">
    <text evidence="1">Belongs to the metallo-dependent hydrolases superfamily. Adenosine and AMP deaminases family. Adenosine deaminase subfamily.</text>
</comment>
<name>ADD_KLEP3</name>
<proteinExistence type="inferred from homology"/>
<dbReference type="EC" id="3.5.4.4" evidence="1"/>
<dbReference type="EMBL" id="CP000964">
    <property type="protein sequence ID" value="ACI06910.1"/>
    <property type="molecule type" value="Genomic_DNA"/>
</dbReference>
<dbReference type="SMR" id="B5XWQ7"/>
<dbReference type="KEGG" id="kpe:KPK_2390"/>
<dbReference type="HOGENOM" id="CLU_039228_0_2_6"/>
<dbReference type="Proteomes" id="UP000001734">
    <property type="component" value="Chromosome"/>
</dbReference>
<dbReference type="GO" id="GO:0005829">
    <property type="term" value="C:cytosol"/>
    <property type="evidence" value="ECO:0007669"/>
    <property type="project" value="TreeGrafter"/>
</dbReference>
<dbReference type="GO" id="GO:0046936">
    <property type="term" value="F:2'-deoxyadenosine deaminase activity"/>
    <property type="evidence" value="ECO:0007669"/>
    <property type="project" value="RHEA"/>
</dbReference>
<dbReference type="GO" id="GO:0004000">
    <property type="term" value="F:adenosine deaminase activity"/>
    <property type="evidence" value="ECO:0007669"/>
    <property type="project" value="UniProtKB-UniRule"/>
</dbReference>
<dbReference type="GO" id="GO:0008270">
    <property type="term" value="F:zinc ion binding"/>
    <property type="evidence" value="ECO:0007669"/>
    <property type="project" value="UniProtKB-UniRule"/>
</dbReference>
<dbReference type="GO" id="GO:0006154">
    <property type="term" value="P:adenosine catabolic process"/>
    <property type="evidence" value="ECO:0007669"/>
    <property type="project" value="TreeGrafter"/>
</dbReference>
<dbReference type="GO" id="GO:0043103">
    <property type="term" value="P:hypoxanthine salvage"/>
    <property type="evidence" value="ECO:0007669"/>
    <property type="project" value="TreeGrafter"/>
</dbReference>
<dbReference type="GO" id="GO:0046103">
    <property type="term" value="P:inosine biosynthetic process"/>
    <property type="evidence" value="ECO:0007669"/>
    <property type="project" value="TreeGrafter"/>
</dbReference>
<dbReference type="GO" id="GO:0009117">
    <property type="term" value="P:nucleotide metabolic process"/>
    <property type="evidence" value="ECO:0007669"/>
    <property type="project" value="UniProtKB-KW"/>
</dbReference>
<dbReference type="GO" id="GO:0009168">
    <property type="term" value="P:purine ribonucleoside monophosphate biosynthetic process"/>
    <property type="evidence" value="ECO:0007669"/>
    <property type="project" value="UniProtKB-UniRule"/>
</dbReference>
<dbReference type="CDD" id="cd01320">
    <property type="entry name" value="ADA"/>
    <property type="match status" value="1"/>
</dbReference>
<dbReference type="FunFam" id="3.20.20.140:FF:000009">
    <property type="entry name" value="Adenosine deaminase"/>
    <property type="match status" value="1"/>
</dbReference>
<dbReference type="Gene3D" id="3.20.20.140">
    <property type="entry name" value="Metal-dependent hydrolases"/>
    <property type="match status" value="1"/>
</dbReference>
<dbReference type="HAMAP" id="MF_00540">
    <property type="entry name" value="A_deaminase"/>
    <property type="match status" value="1"/>
</dbReference>
<dbReference type="InterPro" id="IPR006650">
    <property type="entry name" value="A/AMP_deam_AS"/>
</dbReference>
<dbReference type="InterPro" id="IPR028893">
    <property type="entry name" value="A_deaminase"/>
</dbReference>
<dbReference type="InterPro" id="IPR001365">
    <property type="entry name" value="A_deaminase_dom"/>
</dbReference>
<dbReference type="InterPro" id="IPR006330">
    <property type="entry name" value="Ado/ade_deaminase"/>
</dbReference>
<dbReference type="InterPro" id="IPR032466">
    <property type="entry name" value="Metal_Hydrolase"/>
</dbReference>
<dbReference type="NCBIfam" id="TIGR01430">
    <property type="entry name" value="aden_deam"/>
    <property type="match status" value="1"/>
</dbReference>
<dbReference type="NCBIfam" id="NF006846">
    <property type="entry name" value="PRK09358.1-1"/>
    <property type="match status" value="1"/>
</dbReference>
<dbReference type="PANTHER" id="PTHR11409">
    <property type="entry name" value="ADENOSINE DEAMINASE"/>
    <property type="match status" value="1"/>
</dbReference>
<dbReference type="PANTHER" id="PTHR11409:SF43">
    <property type="entry name" value="ADENOSINE DEAMINASE"/>
    <property type="match status" value="1"/>
</dbReference>
<dbReference type="Pfam" id="PF00962">
    <property type="entry name" value="A_deaminase"/>
    <property type="match status" value="1"/>
</dbReference>
<dbReference type="SUPFAM" id="SSF51556">
    <property type="entry name" value="Metallo-dependent hydrolases"/>
    <property type="match status" value="1"/>
</dbReference>
<dbReference type="PROSITE" id="PS00485">
    <property type="entry name" value="A_DEAMINASE"/>
    <property type="match status" value="1"/>
</dbReference>
<sequence>MIDSSLPLTDIHRHLDGNIRAQTILDLGREFNIALPASTLDTLRPHVQVTSLEPDLVSFLAKLDWGVKVLASLEACRRVAYENVEDAARNGLHYVELRFSPRYMAMTHQLPVDGVVEAVIAGVREGSRDFQVDARLIGILSRTFGEAACQEELAALLAHREGITALDLAGDELGFPGALFLNHFNQARDAGWHITVHAGEAAGPESIWQAIRELGAERIGHGVKAVEDPALMDYLAEHQIGIESCLTSNVQTSTVASLAQHPLKQFLEHGVLASLNTDDPAVQGVDIIHEYTVAAPAAGLSREQIRQAQINGLTQAFLSEQEKAALIQRVAKG</sequence>
<protein>
    <recommendedName>
        <fullName evidence="1">Adenosine deaminase</fullName>
        <ecNumber evidence="1">3.5.4.4</ecNumber>
    </recommendedName>
    <alternativeName>
        <fullName evidence="1">Adenosine aminohydrolase</fullName>
    </alternativeName>
</protein>